<evidence type="ECO:0000255" key="1">
    <source>
        <dbReference type="PROSITE-ProRule" id="PRU00212"/>
    </source>
</evidence>
<evidence type="ECO:0000255" key="2">
    <source>
        <dbReference type="PROSITE-ProRule" id="PRU00215"/>
    </source>
</evidence>
<evidence type="ECO:0000305" key="3"/>
<evidence type="ECO:0000312" key="4">
    <source>
        <dbReference type="Araport" id="AT4G14245"/>
    </source>
</evidence>
<evidence type="ECO:0000312" key="5">
    <source>
        <dbReference type="EMBL" id="CAB10204.1"/>
    </source>
</evidence>
<evidence type="ECO:0000312" key="6">
    <source>
        <dbReference type="EMBL" id="CAB78467.1"/>
    </source>
</evidence>
<proteinExistence type="evidence at transcript level"/>
<comment type="sequence caution" evidence="3">
    <conflict type="frameshift">
        <sequence resource="EMBL" id="BX827765"/>
    </conflict>
</comment>
<comment type="sequence caution" evidence="3">
    <conflict type="erroneous gene model prediction">
        <sequence resource="EMBL-CDS" id="CAB10204"/>
    </conflict>
    <text>The predicted gene At4g14250 has been split into 2 genes: At4g14245 and At4g14250.</text>
</comment>
<comment type="sequence caution" evidence="3">
    <conflict type="frameshift">
        <sequence resource="EMBL-CDS" id="CAB10204"/>
    </conflict>
</comment>
<comment type="sequence caution" evidence="3">
    <conflict type="erroneous gene model prediction">
        <sequence resource="EMBL-CDS" id="CAB78467"/>
    </conflict>
    <text>The predicted gene At4g14250 has been split into 2 genes: At4g14245 and At4g14250.</text>
</comment>
<comment type="sequence caution" evidence="3">
    <conflict type="frameshift">
        <sequence resource="EMBL-CDS" id="CAB78467"/>
    </conflict>
</comment>
<gene>
    <name evidence="3" type="primary">PUX16</name>
    <name evidence="4" type="ordered locus">At4g14245</name>
    <name evidence="5" type="ORF">dl3165c</name>
    <name evidence="6" type="ORF">FCAALL.151</name>
</gene>
<feature type="chain" id="PRO_0000432614" description="Plant UBX domain-containing protein 16">
    <location>
        <begin position="1"/>
        <end position="415"/>
    </location>
</feature>
<feature type="domain" description="UBA" evidence="1">
    <location>
        <begin position="19"/>
        <end position="69"/>
    </location>
</feature>
<feature type="domain" description="UBX" evidence="2">
    <location>
        <begin position="333"/>
        <end position="413"/>
    </location>
</feature>
<feature type="sequence conflict" description="In Ref. 4; BX827765." evidence="3" ref="4">
    <original>N</original>
    <variation>D</variation>
    <location>
        <position position="9"/>
    </location>
</feature>
<feature type="sequence conflict" description="In Ref. 4; BX827765." evidence="3" ref="4">
    <original>T</original>
    <variation>R</variation>
    <location>
        <position position="15"/>
    </location>
</feature>
<feature type="sequence conflict" description="In Ref. 4; BX827765." evidence="3" ref="4">
    <original>KN</original>
    <variation>ED</variation>
    <location>
        <begin position="118"/>
        <end position="119"/>
    </location>
</feature>
<feature type="sequence conflict" description="In Ref. 4; BX827765." evidence="3" ref="4">
    <original>I</original>
    <variation>M</variation>
    <location>
        <position position="186"/>
    </location>
</feature>
<feature type="sequence conflict" description="In Ref. 4; BX827738." evidence="3" ref="4">
    <original>D</original>
    <variation>E</variation>
    <location>
        <position position="293"/>
    </location>
</feature>
<feature type="sequence conflict" description="In Ref. 4; BX827765." evidence="3" ref="4">
    <original>F</original>
    <variation>S</variation>
    <location>
        <position position="354"/>
    </location>
</feature>
<feature type="sequence conflict" description="In Ref. 4; BX827765." evidence="3" ref="4">
    <original>Y</original>
    <variation>H</variation>
    <location>
        <position position="368"/>
    </location>
</feature>
<dbReference type="EMBL" id="Z97335">
    <property type="protein sequence ID" value="CAB10204.1"/>
    <property type="status" value="ALT_SEQ"/>
    <property type="molecule type" value="Genomic_DNA"/>
</dbReference>
<dbReference type="EMBL" id="AL161538">
    <property type="protein sequence ID" value="CAB78467.1"/>
    <property type="status" value="ALT_SEQ"/>
    <property type="molecule type" value="Genomic_DNA"/>
</dbReference>
<dbReference type="EMBL" id="CP002687">
    <property type="status" value="NOT_ANNOTATED_CDS"/>
    <property type="molecule type" value="Genomic_DNA"/>
</dbReference>
<dbReference type="EMBL" id="BX827738">
    <property type="status" value="NOT_ANNOTATED_CDS"/>
    <property type="molecule type" value="mRNA"/>
</dbReference>
<dbReference type="EMBL" id="BX827765">
    <property type="status" value="NOT_ANNOTATED_CDS"/>
    <property type="molecule type" value="mRNA"/>
</dbReference>
<dbReference type="PIR" id="B71404">
    <property type="entry name" value="B71404"/>
</dbReference>
<dbReference type="SMR" id="P0DKI5"/>
<dbReference type="FunCoup" id="P0DKI5">
    <property type="interactions" value="2905"/>
</dbReference>
<dbReference type="STRING" id="3702.P0DKI5"/>
<dbReference type="Araport" id="AT4G14245"/>
<dbReference type="TAIR" id="AT4G14245"/>
<dbReference type="InParanoid" id="P0DKI5"/>
<dbReference type="PRO" id="PR:P0DKI5"/>
<dbReference type="Proteomes" id="UP000006548">
    <property type="component" value="Chromosome 4"/>
</dbReference>
<dbReference type="ExpressionAtlas" id="P0DKI5">
    <property type="expression patterns" value="baseline and differential"/>
</dbReference>
<dbReference type="GO" id="GO:0005634">
    <property type="term" value="C:nucleus"/>
    <property type="evidence" value="ECO:0000318"/>
    <property type="project" value="GO_Central"/>
</dbReference>
<dbReference type="GO" id="GO:0043130">
    <property type="term" value="F:ubiquitin binding"/>
    <property type="evidence" value="ECO:0000318"/>
    <property type="project" value="GO_Central"/>
</dbReference>
<dbReference type="GO" id="GO:0043161">
    <property type="term" value="P:proteasome-mediated ubiquitin-dependent protein catabolic process"/>
    <property type="evidence" value="ECO:0000318"/>
    <property type="project" value="GO_Central"/>
</dbReference>
<dbReference type="CDD" id="cd02958">
    <property type="entry name" value="UAS"/>
    <property type="match status" value="1"/>
</dbReference>
<dbReference type="CDD" id="cd01767">
    <property type="entry name" value="UBX"/>
    <property type="match status" value="1"/>
</dbReference>
<dbReference type="Gene3D" id="1.10.8.10">
    <property type="entry name" value="DNA helicase RuvA subunit, C-terminal domain"/>
    <property type="match status" value="1"/>
</dbReference>
<dbReference type="Gene3D" id="3.40.30.10">
    <property type="entry name" value="Glutaredoxin"/>
    <property type="match status" value="1"/>
</dbReference>
<dbReference type="Gene3D" id="3.10.20.90">
    <property type="entry name" value="Phosphatidylinositol 3-kinase Catalytic Subunit, Chain A, domain 1"/>
    <property type="match status" value="1"/>
</dbReference>
<dbReference type="InterPro" id="IPR036249">
    <property type="entry name" value="Thioredoxin-like_sf"/>
</dbReference>
<dbReference type="InterPro" id="IPR006577">
    <property type="entry name" value="UAS"/>
</dbReference>
<dbReference type="InterPro" id="IPR029071">
    <property type="entry name" value="Ubiquitin-like_domsf"/>
</dbReference>
<dbReference type="InterPro" id="IPR001012">
    <property type="entry name" value="UBX_dom"/>
</dbReference>
<dbReference type="InterPro" id="IPR050730">
    <property type="entry name" value="UBX_domain-protein"/>
</dbReference>
<dbReference type="PANTHER" id="PTHR23322">
    <property type="entry name" value="FAS-ASSOCIATED PROTEIN"/>
    <property type="match status" value="1"/>
</dbReference>
<dbReference type="PANTHER" id="PTHR23322:SF78">
    <property type="entry name" value="PLANT UBX DOMAIN-CONTAINING PROTEIN 16-RELATED"/>
    <property type="match status" value="1"/>
</dbReference>
<dbReference type="Pfam" id="PF13899">
    <property type="entry name" value="Thioredoxin_7"/>
    <property type="match status" value="1"/>
</dbReference>
<dbReference type="Pfam" id="PF14555">
    <property type="entry name" value="UBA_4"/>
    <property type="match status" value="1"/>
</dbReference>
<dbReference type="Pfam" id="PF00789">
    <property type="entry name" value="UBX"/>
    <property type="match status" value="1"/>
</dbReference>
<dbReference type="SMART" id="SM00594">
    <property type="entry name" value="UAS"/>
    <property type="match status" value="1"/>
</dbReference>
<dbReference type="SUPFAM" id="SSF52833">
    <property type="entry name" value="Thioredoxin-like"/>
    <property type="match status" value="1"/>
</dbReference>
<dbReference type="SUPFAM" id="SSF54236">
    <property type="entry name" value="Ubiquitin-like"/>
    <property type="match status" value="1"/>
</dbReference>
<dbReference type="PROSITE" id="PS50033">
    <property type="entry name" value="UBX"/>
    <property type="match status" value="1"/>
</dbReference>
<reference key="1">
    <citation type="journal article" date="1998" name="Nature">
        <title>Analysis of 1.9 Mb of contiguous sequence from chromosome 4 of Arabidopsis thaliana.</title>
        <authorList>
            <person name="Bevan M."/>
            <person name="Bancroft I."/>
            <person name="Bent E."/>
            <person name="Love K."/>
            <person name="Goodman H.M."/>
            <person name="Dean C."/>
            <person name="Bergkamp R."/>
            <person name="Dirkse W."/>
            <person name="van Staveren M."/>
            <person name="Stiekema W."/>
            <person name="Drost L."/>
            <person name="Ridley P."/>
            <person name="Hudson S.-A."/>
            <person name="Patel K."/>
            <person name="Murphy G."/>
            <person name="Piffanelli P."/>
            <person name="Wedler H."/>
            <person name="Wedler E."/>
            <person name="Wambutt R."/>
            <person name="Weitzenegger T."/>
            <person name="Pohl T."/>
            <person name="Terryn N."/>
            <person name="Gielen J."/>
            <person name="Villarroel R."/>
            <person name="De Clercq R."/>
            <person name="van Montagu M."/>
            <person name="Lecharny A."/>
            <person name="Aubourg S."/>
            <person name="Gy I."/>
            <person name="Kreis M."/>
            <person name="Lao N."/>
            <person name="Kavanagh T."/>
            <person name="Hempel S."/>
            <person name="Kotter P."/>
            <person name="Entian K.-D."/>
            <person name="Rieger M."/>
            <person name="Schaefer M."/>
            <person name="Funk B."/>
            <person name="Mueller-Auer S."/>
            <person name="Silvey M."/>
            <person name="James R."/>
            <person name="Monfort A."/>
            <person name="Pons A."/>
            <person name="Puigdomenech P."/>
            <person name="Douka A."/>
            <person name="Voukelatou E."/>
            <person name="Milioni D."/>
            <person name="Hatzopoulos P."/>
            <person name="Piravandi E."/>
            <person name="Obermaier B."/>
            <person name="Hilbert H."/>
            <person name="Duesterhoeft A."/>
            <person name="Moores T."/>
            <person name="Jones J.D.G."/>
            <person name="Eneva T."/>
            <person name="Palme K."/>
            <person name="Benes V."/>
            <person name="Rechmann S."/>
            <person name="Ansorge W."/>
            <person name="Cooke R."/>
            <person name="Berger C."/>
            <person name="Delseny M."/>
            <person name="Voet M."/>
            <person name="Volckaert G."/>
            <person name="Mewes H.-W."/>
            <person name="Klosterman S."/>
            <person name="Schueller C."/>
            <person name="Chalwatzis N."/>
        </authorList>
    </citation>
    <scope>NUCLEOTIDE SEQUENCE [LARGE SCALE GENOMIC DNA]</scope>
    <source>
        <strain>cv. Columbia</strain>
    </source>
</reference>
<reference key="2">
    <citation type="journal article" date="1999" name="Nature">
        <title>Sequence and analysis of chromosome 4 of the plant Arabidopsis thaliana.</title>
        <authorList>
            <person name="Mayer K.F.X."/>
            <person name="Schueller C."/>
            <person name="Wambutt R."/>
            <person name="Murphy G."/>
            <person name="Volckaert G."/>
            <person name="Pohl T."/>
            <person name="Duesterhoeft A."/>
            <person name="Stiekema W."/>
            <person name="Entian K.-D."/>
            <person name="Terryn N."/>
            <person name="Harris B."/>
            <person name="Ansorge W."/>
            <person name="Brandt P."/>
            <person name="Grivell L.A."/>
            <person name="Rieger M."/>
            <person name="Weichselgartner M."/>
            <person name="de Simone V."/>
            <person name="Obermaier B."/>
            <person name="Mache R."/>
            <person name="Mueller M."/>
            <person name="Kreis M."/>
            <person name="Delseny M."/>
            <person name="Puigdomenech P."/>
            <person name="Watson M."/>
            <person name="Schmidtheini T."/>
            <person name="Reichert B."/>
            <person name="Portetelle D."/>
            <person name="Perez-Alonso M."/>
            <person name="Boutry M."/>
            <person name="Bancroft I."/>
            <person name="Vos P."/>
            <person name="Hoheisel J."/>
            <person name="Zimmermann W."/>
            <person name="Wedler H."/>
            <person name="Ridley P."/>
            <person name="Langham S.-A."/>
            <person name="McCullagh B."/>
            <person name="Bilham L."/>
            <person name="Robben J."/>
            <person name="van der Schueren J."/>
            <person name="Grymonprez B."/>
            <person name="Chuang Y.-J."/>
            <person name="Vandenbussche F."/>
            <person name="Braeken M."/>
            <person name="Weltjens I."/>
            <person name="Voet M."/>
            <person name="Bastiaens I."/>
            <person name="Aert R."/>
            <person name="Defoor E."/>
            <person name="Weitzenegger T."/>
            <person name="Bothe G."/>
            <person name="Ramsperger U."/>
            <person name="Hilbert H."/>
            <person name="Braun M."/>
            <person name="Holzer E."/>
            <person name="Brandt A."/>
            <person name="Peters S."/>
            <person name="van Staveren M."/>
            <person name="Dirkse W."/>
            <person name="Mooijman P."/>
            <person name="Klein Lankhorst R."/>
            <person name="Rose M."/>
            <person name="Hauf J."/>
            <person name="Koetter P."/>
            <person name="Berneiser S."/>
            <person name="Hempel S."/>
            <person name="Feldpausch M."/>
            <person name="Lamberth S."/>
            <person name="Van den Daele H."/>
            <person name="De Keyser A."/>
            <person name="Buysshaert C."/>
            <person name="Gielen J."/>
            <person name="Villarroel R."/>
            <person name="De Clercq R."/>
            <person name="van Montagu M."/>
            <person name="Rogers J."/>
            <person name="Cronin A."/>
            <person name="Quail M.A."/>
            <person name="Bray-Allen S."/>
            <person name="Clark L."/>
            <person name="Doggett J."/>
            <person name="Hall S."/>
            <person name="Kay M."/>
            <person name="Lennard N."/>
            <person name="McLay K."/>
            <person name="Mayes R."/>
            <person name="Pettett A."/>
            <person name="Rajandream M.A."/>
            <person name="Lyne M."/>
            <person name="Benes V."/>
            <person name="Rechmann S."/>
            <person name="Borkova D."/>
            <person name="Bloecker H."/>
            <person name="Scharfe M."/>
            <person name="Grimm M."/>
            <person name="Loehnert T.-H."/>
            <person name="Dose S."/>
            <person name="de Haan M."/>
            <person name="Maarse A.C."/>
            <person name="Schaefer M."/>
            <person name="Mueller-Auer S."/>
            <person name="Gabel C."/>
            <person name="Fuchs M."/>
            <person name="Fartmann B."/>
            <person name="Granderath K."/>
            <person name="Dauner D."/>
            <person name="Herzl A."/>
            <person name="Neumann S."/>
            <person name="Argiriou A."/>
            <person name="Vitale D."/>
            <person name="Liguori R."/>
            <person name="Piravandi E."/>
            <person name="Massenet O."/>
            <person name="Quigley F."/>
            <person name="Clabauld G."/>
            <person name="Muendlein A."/>
            <person name="Felber R."/>
            <person name="Schnabl S."/>
            <person name="Hiller R."/>
            <person name="Schmidt W."/>
            <person name="Lecharny A."/>
            <person name="Aubourg S."/>
            <person name="Chefdor F."/>
            <person name="Cooke R."/>
            <person name="Berger C."/>
            <person name="Monfort A."/>
            <person name="Casacuberta E."/>
            <person name="Gibbons T."/>
            <person name="Weber N."/>
            <person name="Vandenbol M."/>
            <person name="Bargues M."/>
            <person name="Terol J."/>
            <person name="Torres A."/>
            <person name="Perez-Perez A."/>
            <person name="Purnelle B."/>
            <person name="Bent E."/>
            <person name="Johnson S."/>
            <person name="Tacon D."/>
            <person name="Jesse T."/>
            <person name="Heijnen L."/>
            <person name="Schwarz S."/>
            <person name="Scholler P."/>
            <person name="Heber S."/>
            <person name="Francs P."/>
            <person name="Bielke C."/>
            <person name="Frishman D."/>
            <person name="Haase D."/>
            <person name="Lemcke K."/>
            <person name="Mewes H.-W."/>
            <person name="Stocker S."/>
            <person name="Zaccaria P."/>
            <person name="Bevan M."/>
            <person name="Wilson R.K."/>
            <person name="de la Bastide M."/>
            <person name="Habermann K."/>
            <person name="Parnell L."/>
            <person name="Dedhia N."/>
            <person name="Gnoj L."/>
            <person name="Schutz K."/>
            <person name="Huang E."/>
            <person name="Spiegel L."/>
            <person name="Sekhon M."/>
            <person name="Murray J."/>
            <person name="Sheet P."/>
            <person name="Cordes M."/>
            <person name="Abu-Threideh J."/>
            <person name="Stoneking T."/>
            <person name="Kalicki J."/>
            <person name="Graves T."/>
            <person name="Harmon G."/>
            <person name="Edwards J."/>
            <person name="Latreille P."/>
            <person name="Courtney L."/>
            <person name="Cloud J."/>
            <person name="Abbott A."/>
            <person name="Scott K."/>
            <person name="Johnson D."/>
            <person name="Minx P."/>
            <person name="Bentley D."/>
            <person name="Fulton B."/>
            <person name="Miller N."/>
            <person name="Greco T."/>
            <person name="Kemp K."/>
            <person name="Kramer J."/>
            <person name="Fulton L."/>
            <person name="Mardis E."/>
            <person name="Dante M."/>
            <person name="Pepin K."/>
            <person name="Hillier L.W."/>
            <person name="Nelson J."/>
            <person name="Spieth J."/>
            <person name="Ryan E."/>
            <person name="Andrews S."/>
            <person name="Geisel C."/>
            <person name="Layman D."/>
            <person name="Du H."/>
            <person name="Ali J."/>
            <person name="Berghoff A."/>
            <person name="Jones K."/>
            <person name="Drone K."/>
            <person name="Cotton M."/>
            <person name="Joshu C."/>
            <person name="Antonoiu B."/>
            <person name="Zidanic M."/>
            <person name="Strong C."/>
            <person name="Sun H."/>
            <person name="Lamar B."/>
            <person name="Yordan C."/>
            <person name="Ma P."/>
            <person name="Zhong J."/>
            <person name="Preston R."/>
            <person name="Vil D."/>
            <person name="Shekher M."/>
            <person name="Matero A."/>
            <person name="Shah R."/>
            <person name="Swaby I.K."/>
            <person name="O'Shaughnessy A."/>
            <person name="Rodriguez M."/>
            <person name="Hoffman J."/>
            <person name="Till S."/>
            <person name="Granat S."/>
            <person name="Shohdy N."/>
            <person name="Hasegawa A."/>
            <person name="Hameed A."/>
            <person name="Lodhi M."/>
            <person name="Johnson A."/>
            <person name="Chen E."/>
            <person name="Marra M.A."/>
            <person name="Martienssen R."/>
            <person name="McCombie W.R."/>
        </authorList>
    </citation>
    <scope>NUCLEOTIDE SEQUENCE [LARGE SCALE GENOMIC DNA]</scope>
    <source>
        <strain>cv. Columbia</strain>
    </source>
</reference>
<reference key="3">
    <citation type="journal article" date="2017" name="Plant J.">
        <title>Araport11: a complete reannotation of the Arabidopsis thaliana reference genome.</title>
        <authorList>
            <person name="Cheng C.Y."/>
            <person name="Krishnakumar V."/>
            <person name="Chan A.P."/>
            <person name="Thibaud-Nissen F."/>
            <person name="Schobel S."/>
            <person name="Town C.D."/>
        </authorList>
    </citation>
    <scope>GENOME REANNOTATION</scope>
    <source>
        <strain>cv. Columbia</strain>
    </source>
</reference>
<reference key="4">
    <citation type="journal article" date="2004" name="Genome Res.">
        <title>Whole genome sequence comparisons and 'full-length' cDNA sequences: a combined approach to evaluate and improve Arabidopsis genome annotation.</title>
        <authorList>
            <person name="Castelli V."/>
            <person name="Aury J.-M."/>
            <person name="Jaillon O."/>
            <person name="Wincker P."/>
            <person name="Clepet C."/>
            <person name="Menard M."/>
            <person name="Cruaud C."/>
            <person name="Quetier F."/>
            <person name="Scarpelli C."/>
            <person name="Schaechter V."/>
            <person name="Temple G."/>
            <person name="Caboche M."/>
            <person name="Weissenbach J."/>
            <person name="Salanoubat M."/>
        </authorList>
    </citation>
    <scope>NUCLEOTIDE SEQUENCE [LARGE SCALE MRNA]</scope>
    <source>
        <strain>cv. Columbia</strain>
    </source>
</reference>
<protein>
    <recommendedName>
        <fullName evidence="3">Plant UBX domain-containing protein 16</fullName>
        <shortName evidence="3">PUX16</shortName>
    </recommendedName>
</protein>
<organism>
    <name type="scientific">Arabidopsis thaliana</name>
    <name type="common">Mouse-ear cress</name>
    <dbReference type="NCBI Taxonomy" id="3702"/>
    <lineage>
        <taxon>Eukaryota</taxon>
        <taxon>Viridiplantae</taxon>
        <taxon>Streptophyta</taxon>
        <taxon>Embryophyta</taxon>
        <taxon>Tracheophyta</taxon>
        <taxon>Spermatophyta</taxon>
        <taxon>Magnoliopsida</taxon>
        <taxon>eudicotyledons</taxon>
        <taxon>Gunneridae</taxon>
        <taxon>Pentapetalae</taxon>
        <taxon>rosids</taxon>
        <taxon>malvids</taxon>
        <taxon>Brassicales</taxon>
        <taxon>Brassicaceae</taxon>
        <taxon>Camelineae</taxon>
        <taxon>Arabidopsis</taxon>
    </lineage>
</organism>
<keyword id="KW-1185">Reference proteome</keyword>
<keyword id="KW-0833">Ubl conjugation pathway</keyword>
<sequence>MGHFFSANNRQRAITTRLQLDEEIVLFRQDQLISSFLEIAVDQTAETARILLQTTDWNIDQAVNLFLTNNAMYREVVDSTTSGTSDDSDSRSSFSFPPPSYILHEGLFEYAKYVSIEKNLWLVVNLQSRTELGSHILNRDVWANDAVSRTIESHFIVWQVYDDTNEGQKISSFYKIEAPPPVVFVINPITGQKMHMWSGVIEAESIVEDLMMFWDAGPHENIASLTRNRRTETAETCLSSYNFYETPAPSWGEEFEEEDNWSSRSNNNQVVAPTWEKELEEQDEWEIWSSRSDTDDFVPPFMGDEYEDPDEVKEEEICLVFPVLTEEPKGDCDRSVVCSLCVRFPDGRRKQRKFLKSEPIQLLWSFCYSHIDESEKKAFKLVQAIPGASKTLDCEADATFDQSGLANSLISVTWE</sequence>
<name>PUX16_ARATH</name>
<accession>P0DKI5</accession>
<accession>F4JUN8</accession>
<accession>O23283</accession>